<keyword id="KW-1185">Reference proteome</keyword>
<keyword id="KW-0687">Ribonucleoprotein</keyword>
<keyword id="KW-0689">Ribosomal protein</keyword>
<keyword id="KW-0694">RNA-binding</keyword>
<keyword id="KW-0699">rRNA-binding</keyword>
<evidence type="ECO:0000255" key="1">
    <source>
        <dbReference type="HAMAP-Rule" id="MF_01363"/>
    </source>
</evidence>
<evidence type="ECO:0000305" key="2"/>
<name>RL21_ECO24</name>
<protein>
    <recommendedName>
        <fullName evidence="1">Large ribosomal subunit protein bL21</fullName>
    </recommendedName>
    <alternativeName>
        <fullName evidence="2">50S ribosomal protein L21</fullName>
    </alternativeName>
</protein>
<feature type="chain" id="PRO_1000067831" description="Large ribosomal subunit protein bL21">
    <location>
        <begin position="1"/>
        <end position="103"/>
    </location>
</feature>
<reference key="1">
    <citation type="journal article" date="2008" name="J. Bacteriol.">
        <title>The pangenome structure of Escherichia coli: comparative genomic analysis of E. coli commensal and pathogenic isolates.</title>
        <authorList>
            <person name="Rasko D.A."/>
            <person name="Rosovitz M.J."/>
            <person name="Myers G.S.A."/>
            <person name="Mongodin E.F."/>
            <person name="Fricke W.F."/>
            <person name="Gajer P."/>
            <person name="Crabtree J."/>
            <person name="Sebaihia M."/>
            <person name="Thomson N.R."/>
            <person name="Chaudhuri R."/>
            <person name="Henderson I.R."/>
            <person name="Sperandio V."/>
            <person name="Ravel J."/>
        </authorList>
    </citation>
    <scope>NUCLEOTIDE SEQUENCE [LARGE SCALE GENOMIC DNA]</scope>
    <source>
        <strain>E24377A / ETEC</strain>
    </source>
</reference>
<dbReference type="EMBL" id="CP000800">
    <property type="protein sequence ID" value="ABV20524.1"/>
    <property type="molecule type" value="Genomic_DNA"/>
</dbReference>
<dbReference type="RefSeq" id="WP_000271401.1">
    <property type="nucleotide sequence ID" value="NC_009801.1"/>
</dbReference>
<dbReference type="SMR" id="A7ZS83"/>
<dbReference type="GeneID" id="93778795"/>
<dbReference type="KEGG" id="ecw:EcE24377A_3671"/>
<dbReference type="HOGENOM" id="CLU_061463_3_3_6"/>
<dbReference type="Proteomes" id="UP000001122">
    <property type="component" value="Chromosome"/>
</dbReference>
<dbReference type="GO" id="GO:0005737">
    <property type="term" value="C:cytoplasm"/>
    <property type="evidence" value="ECO:0007669"/>
    <property type="project" value="UniProtKB-ARBA"/>
</dbReference>
<dbReference type="GO" id="GO:1990904">
    <property type="term" value="C:ribonucleoprotein complex"/>
    <property type="evidence" value="ECO:0007669"/>
    <property type="project" value="UniProtKB-KW"/>
</dbReference>
<dbReference type="GO" id="GO:0005840">
    <property type="term" value="C:ribosome"/>
    <property type="evidence" value="ECO:0007669"/>
    <property type="project" value="UniProtKB-KW"/>
</dbReference>
<dbReference type="GO" id="GO:0019843">
    <property type="term" value="F:rRNA binding"/>
    <property type="evidence" value="ECO:0007669"/>
    <property type="project" value="UniProtKB-UniRule"/>
</dbReference>
<dbReference type="GO" id="GO:0003735">
    <property type="term" value="F:structural constituent of ribosome"/>
    <property type="evidence" value="ECO:0007669"/>
    <property type="project" value="InterPro"/>
</dbReference>
<dbReference type="GO" id="GO:0006412">
    <property type="term" value="P:translation"/>
    <property type="evidence" value="ECO:0007669"/>
    <property type="project" value="UniProtKB-UniRule"/>
</dbReference>
<dbReference type="HAMAP" id="MF_01363">
    <property type="entry name" value="Ribosomal_bL21"/>
    <property type="match status" value="1"/>
</dbReference>
<dbReference type="InterPro" id="IPR028909">
    <property type="entry name" value="bL21-like"/>
</dbReference>
<dbReference type="InterPro" id="IPR036164">
    <property type="entry name" value="bL21-like_sf"/>
</dbReference>
<dbReference type="InterPro" id="IPR001787">
    <property type="entry name" value="Ribosomal_bL21"/>
</dbReference>
<dbReference type="InterPro" id="IPR018258">
    <property type="entry name" value="Ribosomal_bL21_CS"/>
</dbReference>
<dbReference type="NCBIfam" id="TIGR00061">
    <property type="entry name" value="L21"/>
    <property type="match status" value="1"/>
</dbReference>
<dbReference type="PANTHER" id="PTHR21349">
    <property type="entry name" value="50S RIBOSOMAL PROTEIN L21"/>
    <property type="match status" value="1"/>
</dbReference>
<dbReference type="PANTHER" id="PTHR21349:SF0">
    <property type="entry name" value="LARGE RIBOSOMAL SUBUNIT PROTEIN BL21M"/>
    <property type="match status" value="1"/>
</dbReference>
<dbReference type="Pfam" id="PF00829">
    <property type="entry name" value="Ribosomal_L21p"/>
    <property type="match status" value="1"/>
</dbReference>
<dbReference type="SUPFAM" id="SSF141091">
    <property type="entry name" value="L21p-like"/>
    <property type="match status" value="1"/>
</dbReference>
<dbReference type="PROSITE" id="PS01169">
    <property type="entry name" value="RIBOSOMAL_L21"/>
    <property type="match status" value="1"/>
</dbReference>
<gene>
    <name evidence="1" type="primary">rplU</name>
    <name type="ordered locus">EcE24377A_3671</name>
</gene>
<comment type="function">
    <text evidence="1">This protein binds to 23S rRNA in the presence of protein L20.</text>
</comment>
<comment type="subunit">
    <text evidence="1">Part of the 50S ribosomal subunit. Contacts protein L20.</text>
</comment>
<comment type="similarity">
    <text evidence="1">Belongs to the bacterial ribosomal protein bL21 family.</text>
</comment>
<sequence>MYAVFQSGGKQHRVSEGQTVRLEKLDIATGETVEFAEVLMIANGEEVKIGVPFVDGGVIKAEVVAHGRGEKVKIVKFRRRKHYRKQQGHRQWFTDVKITGISA</sequence>
<organism>
    <name type="scientific">Escherichia coli O139:H28 (strain E24377A / ETEC)</name>
    <dbReference type="NCBI Taxonomy" id="331111"/>
    <lineage>
        <taxon>Bacteria</taxon>
        <taxon>Pseudomonadati</taxon>
        <taxon>Pseudomonadota</taxon>
        <taxon>Gammaproteobacteria</taxon>
        <taxon>Enterobacterales</taxon>
        <taxon>Enterobacteriaceae</taxon>
        <taxon>Escherichia</taxon>
    </lineage>
</organism>
<proteinExistence type="inferred from homology"/>
<accession>A7ZS83</accession>